<accession>Q88AR2</accession>
<reference key="1">
    <citation type="journal article" date="2003" name="Proc. Natl. Acad. Sci. U.S.A.">
        <title>The complete genome sequence of the Arabidopsis and tomato pathogen Pseudomonas syringae pv. tomato DC3000.</title>
        <authorList>
            <person name="Buell C.R."/>
            <person name="Joardar V."/>
            <person name="Lindeberg M."/>
            <person name="Selengut J."/>
            <person name="Paulsen I.T."/>
            <person name="Gwinn M.L."/>
            <person name="Dodson R.J."/>
            <person name="DeBoy R.T."/>
            <person name="Durkin A.S."/>
            <person name="Kolonay J.F."/>
            <person name="Madupu R."/>
            <person name="Daugherty S.C."/>
            <person name="Brinkac L.M."/>
            <person name="Beanan M.J."/>
            <person name="Haft D.H."/>
            <person name="Nelson W.C."/>
            <person name="Davidsen T.M."/>
            <person name="Zafar N."/>
            <person name="Zhou L."/>
            <person name="Liu J."/>
            <person name="Yuan Q."/>
            <person name="Khouri H.M."/>
            <person name="Fedorova N.B."/>
            <person name="Tran B."/>
            <person name="Russell D."/>
            <person name="Berry K.J."/>
            <person name="Utterback T.R."/>
            <person name="Van Aken S.E."/>
            <person name="Feldblyum T.V."/>
            <person name="D'Ascenzo M."/>
            <person name="Deng W.-L."/>
            <person name="Ramos A.R."/>
            <person name="Alfano J.R."/>
            <person name="Cartinhour S."/>
            <person name="Chatterjee A.K."/>
            <person name="Delaney T.P."/>
            <person name="Lazarowitz S.G."/>
            <person name="Martin G.B."/>
            <person name="Schneider D.J."/>
            <person name="Tang X."/>
            <person name="Bender C.L."/>
            <person name="White O."/>
            <person name="Fraser C.M."/>
            <person name="Collmer A."/>
        </authorList>
    </citation>
    <scope>NUCLEOTIDE SEQUENCE [LARGE SCALE GENOMIC DNA]</scope>
    <source>
        <strain>ATCC BAA-871 / DC3000</strain>
    </source>
</reference>
<name>ARGA_PSESM</name>
<dbReference type="EC" id="2.3.1.1" evidence="1"/>
<dbReference type="EMBL" id="AE016853">
    <property type="protein sequence ID" value="AAO53869.1"/>
    <property type="status" value="ALT_INIT"/>
    <property type="molecule type" value="Genomic_DNA"/>
</dbReference>
<dbReference type="RefSeq" id="NP_790174.1">
    <property type="nucleotide sequence ID" value="NC_004578.1"/>
</dbReference>
<dbReference type="RefSeq" id="WP_005763455.1">
    <property type="nucleotide sequence ID" value="NC_004578.1"/>
</dbReference>
<dbReference type="SMR" id="Q88AR2"/>
<dbReference type="STRING" id="223283.PSPTO_0324"/>
<dbReference type="GeneID" id="1181933"/>
<dbReference type="KEGG" id="pst:PSPTO_0324"/>
<dbReference type="PATRIC" id="fig|223283.9.peg.340"/>
<dbReference type="eggNOG" id="COG0548">
    <property type="taxonomic scope" value="Bacteria"/>
</dbReference>
<dbReference type="eggNOG" id="COG1246">
    <property type="taxonomic scope" value="Bacteria"/>
</dbReference>
<dbReference type="HOGENOM" id="CLU_024773_0_0_6"/>
<dbReference type="OrthoDB" id="9802238at2"/>
<dbReference type="UniPathway" id="UPA00068">
    <property type="reaction ID" value="UER00106"/>
</dbReference>
<dbReference type="Proteomes" id="UP000002515">
    <property type="component" value="Chromosome"/>
</dbReference>
<dbReference type="GO" id="GO:0005737">
    <property type="term" value="C:cytoplasm"/>
    <property type="evidence" value="ECO:0007669"/>
    <property type="project" value="UniProtKB-SubCell"/>
</dbReference>
<dbReference type="GO" id="GO:0004042">
    <property type="term" value="F:L-glutamate N-acetyltransferase activity"/>
    <property type="evidence" value="ECO:0007669"/>
    <property type="project" value="UniProtKB-UniRule"/>
</dbReference>
<dbReference type="GO" id="GO:0006526">
    <property type="term" value="P:L-arginine biosynthetic process"/>
    <property type="evidence" value="ECO:0007669"/>
    <property type="project" value="UniProtKB-UniRule"/>
</dbReference>
<dbReference type="CDD" id="cd04237">
    <property type="entry name" value="AAK_NAGS-ABP"/>
    <property type="match status" value="1"/>
</dbReference>
<dbReference type="CDD" id="cd04301">
    <property type="entry name" value="NAT_SF"/>
    <property type="match status" value="1"/>
</dbReference>
<dbReference type="Gene3D" id="3.40.630.30">
    <property type="match status" value="1"/>
</dbReference>
<dbReference type="Gene3D" id="3.40.1160.10">
    <property type="entry name" value="Acetylglutamate kinase-like"/>
    <property type="match status" value="1"/>
</dbReference>
<dbReference type="HAMAP" id="MF_01105">
    <property type="entry name" value="N_acetyl_glu_synth"/>
    <property type="match status" value="1"/>
</dbReference>
<dbReference type="InterPro" id="IPR036393">
    <property type="entry name" value="AceGlu_kinase-like_sf"/>
</dbReference>
<dbReference type="InterPro" id="IPR016181">
    <property type="entry name" value="Acyl_CoA_acyltransferase"/>
</dbReference>
<dbReference type="InterPro" id="IPR001048">
    <property type="entry name" value="Asp/Glu/Uridylate_kinase"/>
</dbReference>
<dbReference type="InterPro" id="IPR000182">
    <property type="entry name" value="GNAT_dom"/>
</dbReference>
<dbReference type="InterPro" id="IPR033719">
    <property type="entry name" value="NAGS_kin"/>
</dbReference>
<dbReference type="InterPro" id="IPR010167">
    <property type="entry name" value="NH2A_AcTrfase"/>
</dbReference>
<dbReference type="NCBIfam" id="TIGR01890">
    <property type="entry name" value="N-Ac-Glu-synth"/>
    <property type="match status" value="1"/>
</dbReference>
<dbReference type="NCBIfam" id="NF003641">
    <property type="entry name" value="PRK05279.1"/>
    <property type="match status" value="1"/>
</dbReference>
<dbReference type="PANTHER" id="PTHR30602">
    <property type="entry name" value="AMINO-ACID ACETYLTRANSFERASE"/>
    <property type="match status" value="1"/>
</dbReference>
<dbReference type="PANTHER" id="PTHR30602:SF12">
    <property type="entry name" value="AMINO-ACID ACETYLTRANSFERASE NAGS1, CHLOROPLASTIC-RELATED"/>
    <property type="match status" value="1"/>
</dbReference>
<dbReference type="Pfam" id="PF00696">
    <property type="entry name" value="AA_kinase"/>
    <property type="match status" value="1"/>
</dbReference>
<dbReference type="Pfam" id="PF13508">
    <property type="entry name" value="Acetyltransf_7"/>
    <property type="match status" value="1"/>
</dbReference>
<dbReference type="PIRSF" id="PIRSF000423">
    <property type="entry name" value="ArgA"/>
    <property type="match status" value="1"/>
</dbReference>
<dbReference type="SUPFAM" id="SSF55729">
    <property type="entry name" value="Acyl-CoA N-acyltransferases (Nat)"/>
    <property type="match status" value="1"/>
</dbReference>
<dbReference type="SUPFAM" id="SSF53633">
    <property type="entry name" value="Carbamate kinase-like"/>
    <property type="match status" value="1"/>
</dbReference>
<dbReference type="PROSITE" id="PS51186">
    <property type="entry name" value="GNAT"/>
    <property type="match status" value="1"/>
</dbReference>
<evidence type="ECO:0000255" key="1">
    <source>
        <dbReference type="HAMAP-Rule" id="MF_01105"/>
    </source>
</evidence>
<evidence type="ECO:0000305" key="2"/>
<feature type="chain" id="PRO_0000186801" description="Amino-acid acetyltransferase">
    <location>
        <begin position="1"/>
        <end position="432"/>
    </location>
</feature>
<feature type="domain" description="N-acetyltransferase" evidence="1">
    <location>
        <begin position="286"/>
        <end position="425"/>
    </location>
</feature>
<keyword id="KW-0012">Acyltransferase</keyword>
<keyword id="KW-0028">Amino-acid biosynthesis</keyword>
<keyword id="KW-0055">Arginine biosynthesis</keyword>
<keyword id="KW-0963">Cytoplasm</keyword>
<keyword id="KW-1185">Reference proteome</keyword>
<keyword id="KW-0808">Transferase</keyword>
<sequence>MPEYVNWLRHASPYINAHRDCTFVVMLPGDGVAHPNFGNIVHDLVLLHSLGVRLVLVHGSRPQIESRLAQRGITPRYHRDMRITDTETLECVIDAVGQLRISIEARLSMDMAASPMQGSRLRVTSGNVVTARPIGVLEGIDYQHTGEVRRVDRKGINRLLDERHIVLLSPLGYSPTGEIFNLACEDVATRAAIDLAADKLLLFGAETGLLDEQGRLVRELRPQQVPAHLQRLGGNYQAELLDAAAEACRGGVARSHIVSYAEDGALLTELFTRDGGGTLVAQEQFELVREAAIEDVGGLMDLITPLEEQGILVRRSREVLEREITQFSVVEREGLIIACAALYPIADSESGELACLAVNPEYRHGGRGDELLERIENRARALGIKTLFVLTTRTAHWFRERGFEPSSVDRLPSARASLYNFQRNSKIFEKAI</sequence>
<organism>
    <name type="scientific">Pseudomonas syringae pv. tomato (strain ATCC BAA-871 / DC3000)</name>
    <dbReference type="NCBI Taxonomy" id="223283"/>
    <lineage>
        <taxon>Bacteria</taxon>
        <taxon>Pseudomonadati</taxon>
        <taxon>Pseudomonadota</taxon>
        <taxon>Gammaproteobacteria</taxon>
        <taxon>Pseudomonadales</taxon>
        <taxon>Pseudomonadaceae</taxon>
        <taxon>Pseudomonas</taxon>
    </lineage>
</organism>
<proteinExistence type="inferred from homology"/>
<comment type="catalytic activity">
    <reaction evidence="1">
        <text>L-glutamate + acetyl-CoA = N-acetyl-L-glutamate + CoA + H(+)</text>
        <dbReference type="Rhea" id="RHEA:24292"/>
        <dbReference type="ChEBI" id="CHEBI:15378"/>
        <dbReference type="ChEBI" id="CHEBI:29985"/>
        <dbReference type="ChEBI" id="CHEBI:44337"/>
        <dbReference type="ChEBI" id="CHEBI:57287"/>
        <dbReference type="ChEBI" id="CHEBI:57288"/>
        <dbReference type="EC" id="2.3.1.1"/>
    </reaction>
</comment>
<comment type="pathway">
    <text evidence="1">Amino-acid biosynthesis; L-arginine biosynthesis; N(2)-acetyl-L-ornithine from L-glutamate: step 1/4.</text>
</comment>
<comment type="subcellular location">
    <subcellularLocation>
        <location evidence="1">Cytoplasm</location>
    </subcellularLocation>
</comment>
<comment type="similarity">
    <text evidence="1">Belongs to the acetyltransferase family. ArgA subfamily.</text>
</comment>
<comment type="sequence caution" evidence="2">
    <conflict type="erroneous initiation">
        <sequence resource="EMBL-CDS" id="AAO53869"/>
    </conflict>
</comment>
<protein>
    <recommendedName>
        <fullName evidence="1">Amino-acid acetyltransferase</fullName>
        <ecNumber evidence="1">2.3.1.1</ecNumber>
    </recommendedName>
    <alternativeName>
        <fullName evidence="1">N-acetylglutamate synthase</fullName>
        <shortName evidence="1">AGS</shortName>
        <shortName evidence="1">NAGS</shortName>
    </alternativeName>
</protein>
<gene>
    <name evidence="1" type="primary">argA</name>
    <name type="ordered locus">PSPTO_0324</name>
</gene>